<accession>Q9BT81</accession>
<accession>B4DKV0</accession>
<accession>Q53YD0</accession>
<protein>
    <recommendedName>
        <fullName>Transcription factor SOX-7</fullName>
    </recommendedName>
</protein>
<keyword id="KW-0010">Activator</keyword>
<keyword id="KW-0025">Alternative splicing</keyword>
<keyword id="KW-0963">Cytoplasm</keyword>
<keyword id="KW-0238">DNA-binding</keyword>
<keyword id="KW-0539">Nucleus</keyword>
<keyword id="KW-1267">Proteomics identification</keyword>
<keyword id="KW-1185">Reference proteome</keyword>
<keyword id="KW-0804">Transcription</keyword>
<keyword id="KW-0805">Transcription regulation</keyword>
<organism>
    <name type="scientific">Homo sapiens</name>
    <name type="common">Human</name>
    <dbReference type="NCBI Taxonomy" id="9606"/>
    <lineage>
        <taxon>Eukaryota</taxon>
        <taxon>Metazoa</taxon>
        <taxon>Chordata</taxon>
        <taxon>Craniata</taxon>
        <taxon>Vertebrata</taxon>
        <taxon>Euteleostomi</taxon>
        <taxon>Mammalia</taxon>
        <taxon>Eutheria</taxon>
        <taxon>Euarchontoglires</taxon>
        <taxon>Primates</taxon>
        <taxon>Haplorrhini</taxon>
        <taxon>Catarrhini</taxon>
        <taxon>Hominidae</taxon>
        <taxon>Homo</taxon>
    </lineage>
</organism>
<dbReference type="EMBL" id="AJ409320">
    <property type="protein sequence ID" value="CAC84226.1"/>
    <property type="molecule type" value="mRNA"/>
</dbReference>
<dbReference type="EMBL" id="BT006693">
    <property type="protein sequence ID" value="AAP35339.1"/>
    <property type="molecule type" value="mRNA"/>
</dbReference>
<dbReference type="EMBL" id="AK055556">
    <property type="protein sequence ID" value="BAB70955.1"/>
    <property type="molecule type" value="mRNA"/>
</dbReference>
<dbReference type="EMBL" id="AK296724">
    <property type="protein sequence ID" value="BAG59312.1"/>
    <property type="molecule type" value="mRNA"/>
</dbReference>
<dbReference type="EMBL" id="AC011008">
    <property type="status" value="NOT_ANNOTATED_CDS"/>
    <property type="molecule type" value="Genomic_DNA"/>
</dbReference>
<dbReference type="EMBL" id="AC105001">
    <property type="status" value="NOT_ANNOTATED_CDS"/>
    <property type="molecule type" value="Genomic_DNA"/>
</dbReference>
<dbReference type="EMBL" id="BC071947">
    <property type="protein sequence ID" value="AAH71947.1"/>
    <property type="molecule type" value="mRNA"/>
</dbReference>
<dbReference type="CCDS" id="CCDS5977.1">
    <molecule id="Q9BT81-1"/>
</dbReference>
<dbReference type="RefSeq" id="NP_113627.1">
    <molecule id="Q9BT81-1"/>
    <property type="nucleotide sequence ID" value="NM_031439.4"/>
</dbReference>
<dbReference type="SMR" id="Q9BT81"/>
<dbReference type="BioGRID" id="123691">
    <property type="interactions" value="81"/>
</dbReference>
<dbReference type="FunCoup" id="Q9BT81">
    <property type="interactions" value="1714"/>
</dbReference>
<dbReference type="IntAct" id="Q9BT81">
    <property type="interactions" value="80"/>
</dbReference>
<dbReference type="MINT" id="Q9BT81"/>
<dbReference type="STRING" id="9606.ENSP00000301921"/>
<dbReference type="GlyGen" id="Q9BT81">
    <property type="glycosylation" value="3 sites, 1 O-linked glycan (1 site)"/>
</dbReference>
<dbReference type="iPTMnet" id="Q9BT81"/>
<dbReference type="PhosphoSitePlus" id="Q9BT81"/>
<dbReference type="BioMuta" id="SOX7"/>
<dbReference type="DMDM" id="20532272"/>
<dbReference type="jPOST" id="Q9BT81"/>
<dbReference type="MassIVE" id="Q9BT81"/>
<dbReference type="PaxDb" id="9606-ENSP00000301921"/>
<dbReference type="PeptideAtlas" id="Q9BT81"/>
<dbReference type="ProteomicsDB" id="4490"/>
<dbReference type="ProteomicsDB" id="78959">
    <molecule id="Q9BT81-1"/>
</dbReference>
<dbReference type="Antibodypedia" id="1821">
    <property type="antibodies" value="206 antibodies from 30 providers"/>
</dbReference>
<dbReference type="DNASU" id="83595"/>
<dbReference type="Ensembl" id="ENST00000304501.2">
    <molecule id="Q9BT81-1"/>
    <property type="protein sequence ID" value="ENSP00000301921.1"/>
    <property type="gene ID" value="ENSG00000171056.8"/>
</dbReference>
<dbReference type="Ensembl" id="ENST00000646538.2">
    <molecule id="Q9BT81-1"/>
    <property type="protein sequence ID" value="ENSP00000495029.1"/>
    <property type="gene ID" value="ENSG00000285438.2"/>
</dbReference>
<dbReference type="GeneID" id="83595"/>
<dbReference type="KEGG" id="hsa:83595"/>
<dbReference type="MANE-Select" id="ENST00000304501.2">
    <property type="protein sequence ID" value="ENSP00000301921.1"/>
    <property type="RefSeq nucleotide sequence ID" value="NM_031439.4"/>
    <property type="RefSeq protein sequence ID" value="NP_113627.1"/>
</dbReference>
<dbReference type="UCSC" id="uc003wtf.5">
    <molecule id="Q9BT81-1"/>
    <property type="organism name" value="human"/>
</dbReference>
<dbReference type="AGR" id="HGNC:18196"/>
<dbReference type="CTD" id="83595"/>
<dbReference type="DisGeNET" id="83595"/>
<dbReference type="GeneCards" id="SOX7"/>
<dbReference type="HGNC" id="HGNC:18196">
    <property type="gene designation" value="SOX7"/>
</dbReference>
<dbReference type="HPA" id="ENSG00000171056">
    <property type="expression patterns" value="Tissue enhanced (vagina)"/>
</dbReference>
<dbReference type="MalaCards" id="SOX7"/>
<dbReference type="MIM" id="612202">
    <property type="type" value="gene"/>
</dbReference>
<dbReference type="neXtProt" id="NX_Q9BT81"/>
<dbReference type="OpenTargets" id="ENSG00000171056"/>
<dbReference type="OpenTargets" id="ENSG00000258724"/>
<dbReference type="PharmGKB" id="PA38307"/>
<dbReference type="VEuPathDB" id="HostDB:ENSG00000171056"/>
<dbReference type="eggNOG" id="KOG0527">
    <property type="taxonomic scope" value="Eukaryota"/>
</dbReference>
<dbReference type="GeneTree" id="ENSGT00940000161092"/>
<dbReference type="HOGENOM" id="CLU_044994_0_0_1"/>
<dbReference type="InParanoid" id="Q9BT81"/>
<dbReference type="OMA" id="CQEEHAH"/>
<dbReference type="OrthoDB" id="6247875at2759"/>
<dbReference type="PAN-GO" id="Q9BT81">
    <property type="GO annotations" value="5 GO annotations based on evolutionary models"/>
</dbReference>
<dbReference type="PhylomeDB" id="Q9BT81"/>
<dbReference type="TreeFam" id="TF321918"/>
<dbReference type="PathwayCommons" id="Q9BT81"/>
<dbReference type="Reactome" id="R-HSA-3769402">
    <property type="pathway name" value="Deactivation of the beta-catenin transactivating complex"/>
</dbReference>
<dbReference type="SignaLink" id="Q9BT81"/>
<dbReference type="SIGNOR" id="Q9BT81"/>
<dbReference type="BioGRID-ORCS" id="83595">
    <property type="hits" value="20 hits in 1168 CRISPR screens"/>
</dbReference>
<dbReference type="ChiTaRS" id="SOX7">
    <property type="organism name" value="human"/>
</dbReference>
<dbReference type="GenomeRNAi" id="83595"/>
<dbReference type="Pharos" id="Q9BT81">
    <property type="development level" value="Tbio"/>
</dbReference>
<dbReference type="PRO" id="PR:Q9BT81"/>
<dbReference type="Proteomes" id="UP000005640">
    <property type="component" value="Chromosome 8"/>
</dbReference>
<dbReference type="RNAct" id="Q9BT81">
    <property type="molecule type" value="protein"/>
</dbReference>
<dbReference type="Bgee" id="ENSG00000171056">
    <property type="expression patterns" value="Expressed in lower esophagus mucosa and 98 other cell types or tissues"/>
</dbReference>
<dbReference type="GO" id="GO:0000785">
    <property type="term" value="C:chromatin"/>
    <property type="evidence" value="ECO:0000247"/>
    <property type="project" value="NTNU_SB"/>
</dbReference>
<dbReference type="GO" id="GO:0005737">
    <property type="term" value="C:cytoplasm"/>
    <property type="evidence" value="ECO:0000314"/>
    <property type="project" value="UniProtKB"/>
</dbReference>
<dbReference type="GO" id="GO:0005654">
    <property type="term" value="C:nucleoplasm"/>
    <property type="evidence" value="ECO:0000304"/>
    <property type="project" value="Reactome"/>
</dbReference>
<dbReference type="GO" id="GO:0005634">
    <property type="term" value="C:nucleus"/>
    <property type="evidence" value="ECO:0000314"/>
    <property type="project" value="UniProtKB"/>
</dbReference>
<dbReference type="GO" id="GO:0001228">
    <property type="term" value="F:DNA-binding transcription activator activity, RNA polymerase II-specific"/>
    <property type="evidence" value="ECO:0000318"/>
    <property type="project" value="GO_Central"/>
</dbReference>
<dbReference type="GO" id="GO:0003700">
    <property type="term" value="F:DNA-binding transcription factor activity"/>
    <property type="evidence" value="ECO:0000314"/>
    <property type="project" value="UniProtKB"/>
</dbReference>
<dbReference type="GO" id="GO:0000981">
    <property type="term" value="F:DNA-binding transcription factor activity, RNA polymerase II-specific"/>
    <property type="evidence" value="ECO:0000247"/>
    <property type="project" value="NTNU_SB"/>
</dbReference>
<dbReference type="GO" id="GO:0000978">
    <property type="term" value="F:RNA polymerase II cis-regulatory region sequence-specific DNA binding"/>
    <property type="evidence" value="ECO:0000318"/>
    <property type="project" value="GO_Central"/>
</dbReference>
<dbReference type="GO" id="GO:1990837">
    <property type="term" value="F:sequence-specific double-stranded DNA binding"/>
    <property type="evidence" value="ECO:0000314"/>
    <property type="project" value="ARUK-UCL"/>
</dbReference>
<dbReference type="GO" id="GO:0000976">
    <property type="term" value="F:transcription cis-regulatory region binding"/>
    <property type="evidence" value="ECO:0000250"/>
    <property type="project" value="UniProtKB"/>
</dbReference>
<dbReference type="GO" id="GO:0030154">
    <property type="term" value="P:cell differentiation"/>
    <property type="evidence" value="ECO:0000318"/>
    <property type="project" value="GO_Central"/>
</dbReference>
<dbReference type="GO" id="GO:0001706">
    <property type="term" value="P:endoderm formation"/>
    <property type="evidence" value="ECO:0000314"/>
    <property type="project" value="UniProtKB"/>
</dbReference>
<dbReference type="GO" id="GO:0045892">
    <property type="term" value="P:negative regulation of DNA-templated transcription"/>
    <property type="evidence" value="ECO:0000314"/>
    <property type="project" value="UniProtKB"/>
</dbReference>
<dbReference type="GO" id="GO:0045944">
    <property type="term" value="P:positive regulation of transcription by RNA polymerase II"/>
    <property type="evidence" value="ECO:0000318"/>
    <property type="project" value="GO_Central"/>
</dbReference>
<dbReference type="CDD" id="cd22046">
    <property type="entry name" value="HMG-box_SoxF_SOX7"/>
    <property type="match status" value="1"/>
</dbReference>
<dbReference type="FunFam" id="1.10.30.10:FF:000008">
    <property type="entry name" value="transcription factor SOX-7"/>
    <property type="match status" value="1"/>
</dbReference>
<dbReference type="Gene3D" id="1.10.30.10">
    <property type="entry name" value="High mobility group box domain"/>
    <property type="match status" value="1"/>
</dbReference>
<dbReference type="InterPro" id="IPR009071">
    <property type="entry name" value="HMG_box_dom"/>
</dbReference>
<dbReference type="InterPro" id="IPR036910">
    <property type="entry name" value="HMG_box_dom_sf"/>
</dbReference>
<dbReference type="InterPro" id="IPR033392">
    <property type="entry name" value="Sox7/17/18_central"/>
</dbReference>
<dbReference type="InterPro" id="IPR021934">
    <property type="entry name" value="Sox_C"/>
</dbReference>
<dbReference type="InterPro" id="IPR050140">
    <property type="entry name" value="SRY-related_HMG-box_TF-like"/>
</dbReference>
<dbReference type="PANTHER" id="PTHR10270">
    <property type="entry name" value="SOX TRANSCRIPTION FACTOR"/>
    <property type="match status" value="1"/>
</dbReference>
<dbReference type="PANTHER" id="PTHR10270:SF210">
    <property type="entry name" value="TRANSCRIPTION FACTOR SOX-7"/>
    <property type="match status" value="1"/>
</dbReference>
<dbReference type="Pfam" id="PF00505">
    <property type="entry name" value="HMG_box"/>
    <property type="match status" value="1"/>
</dbReference>
<dbReference type="Pfam" id="PF12067">
    <property type="entry name" value="Sox17_18_mid"/>
    <property type="match status" value="1"/>
</dbReference>
<dbReference type="SMART" id="SM00398">
    <property type="entry name" value="HMG"/>
    <property type="match status" value="1"/>
</dbReference>
<dbReference type="SUPFAM" id="SSF47095">
    <property type="entry name" value="HMG-box"/>
    <property type="match status" value="1"/>
</dbReference>
<dbReference type="PROSITE" id="PS50118">
    <property type="entry name" value="HMG_BOX_2"/>
    <property type="match status" value="1"/>
</dbReference>
<dbReference type="PROSITE" id="PS51516">
    <property type="entry name" value="SOX_C"/>
    <property type="match status" value="1"/>
</dbReference>
<name>SOX7_HUMAN</name>
<sequence length="388" mass="42197">MASLLGAYPWPEGLECPALDAELSDGQSPPAVPRPPGDKGSESRIRRPMNAFMVWAKDERKRLAVQNPDLHNAELSKMLGKSWKALTLSQKRPYVDEAERLRLQHMQDYPNYKYRPRRKKQAKRLCKRVDPGFLLSSLSRDQNALPEKRSGSRGALGEKEDRGEYSPGTALPSLRGCYHEGPAGGGGGGTPSSVDTYPYGLPTPPEMSPLDVLEPEQTFFSSPCQEEHGHPRRIPHLPGHPYSPEYAPSPLHCSHPLGSLALGQSPGVSMMSPVPGCPPSPAYYSPATYHPLHSNLQAHLGQLSPPPEHPGFDALDQLSQVELLGDMDRNEFDQYLNTPGHPDSATGAMALSGHVPVSQVTPTGPTETSLISVLADATATYYNSYSVS</sequence>
<gene>
    <name type="primary">SOX7</name>
</gene>
<reference key="1">
    <citation type="journal article" date="2001" name="Nucleic Acids Res.">
        <title>SOX7 transcription factor: sequence, chromosomal localisation, expression, transactivation and interference with Wnt signalling.</title>
        <authorList>
            <person name="Takash W."/>
            <person name="Canizares J."/>
            <person name="Bonneaud N."/>
            <person name="Poulat F."/>
            <person name="Mattei M.-G."/>
            <person name="Jay P."/>
            <person name="Berta P."/>
        </authorList>
    </citation>
    <scope>NUCLEOTIDE SEQUENCE [MRNA] (ISOFORM 1)</scope>
    <scope>TISSUE SPECIFICITY</scope>
    <scope>DEVELOPMENTAL STAGE</scope>
    <source>
        <tissue>Fetal thymus</tissue>
    </source>
</reference>
<reference key="2">
    <citation type="submission" date="2003-05" db="EMBL/GenBank/DDBJ databases">
        <title>Cloning of human full-length CDSs in BD Creator(TM) system donor vector.</title>
        <authorList>
            <person name="Kalnine N."/>
            <person name="Chen X."/>
            <person name="Rolfs A."/>
            <person name="Halleck A."/>
            <person name="Hines L."/>
            <person name="Eisenstein S."/>
            <person name="Koundinya M."/>
            <person name="Raphael J."/>
            <person name="Moreira D."/>
            <person name="Kelley T."/>
            <person name="LaBaer J."/>
            <person name="Lin Y."/>
            <person name="Phelan M."/>
            <person name="Farmer A."/>
        </authorList>
    </citation>
    <scope>NUCLEOTIDE SEQUENCE [LARGE SCALE MRNA] (ISOFORM 1)</scope>
</reference>
<reference key="3">
    <citation type="journal article" date="2004" name="Nat. Genet.">
        <title>Complete sequencing and characterization of 21,243 full-length human cDNAs.</title>
        <authorList>
            <person name="Ota T."/>
            <person name="Suzuki Y."/>
            <person name="Nishikawa T."/>
            <person name="Otsuki T."/>
            <person name="Sugiyama T."/>
            <person name="Irie R."/>
            <person name="Wakamatsu A."/>
            <person name="Hayashi K."/>
            <person name="Sato H."/>
            <person name="Nagai K."/>
            <person name="Kimura K."/>
            <person name="Makita H."/>
            <person name="Sekine M."/>
            <person name="Obayashi M."/>
            <person name="Nishi T."/>
            <person name="Shibahara T."/>
            <person name="Tanaka T."/>
            <person name="Ishii S."/>
            <person name="Yamamoto J."/>
            <person name="Saito K."/>
            <person name="Kawai Y."/>
            <person name="Isono Y."/>
            <person name="Nakamura Y."/>
            <person name="Nagahari K."/>
            <person name="Murakami K."/>
            <person name="Yasuda T."/>
            <person name="Iwayanagi T."/>
            <person name="Wagatsuma M."/>
            <person name="Shiratori A."/>
            <person name="Sudo H."/>
            <person name="Hosoiri T."/>
            <person name="Kaku Y."/>
            <person name="Kodaira H."/>
            <person name="Kondo H."/>
            <person name="Sugawara M."/>
            <person name="Takahashi M."/>
            <person name="Kanda K."/>
            <person name="Yokoi T."/>
            <person name="Furuya T."/>
            <person name="Kikkawa E."/>
            <person name="Omura Y."/>
            <person name="Abe K."/>
            <person name="Kamihara K."/>
            <person name="Katsuta N."/>
            <person name="Sato K."/>
            <person name="Tanikawa M."/>
            <person name="Yamazaki M."/>
            <person name="Ninomiya K."/>
            <person name="Ishibashi T."/>
            <person name="Yamashita H."/>
            <person name="Murakawa K."/>
            <person name="Fujimori K."/>
            <person name="Tanai H."/>
            <person name="Kimata M."/>
            <person name="Watanabe M."/>
            <person name="Hiraoka S."/>
            <person name="Chiba Y."/>
            <person name="Ishida S."/>
            <person name="Ono Y."/>
            <person name="Takiguchi S."/>
            <person name="Watanabe S."/>
            <person name="Yosida M."/>
            <person name="Hotuta T."/>
            <person name="Kusano J."/>
            <person name="Kanehori K."/>
            <person name="Takahashi-Fujii A."/>
            <person name="Hara H."/>
            <person name="Tanase T.-O."/>
            <person name="Nomura Y."/>
            <person name="Togiya S."/>
            <person name="Komai F."/>
            <person name="Hara R."/>
            <person name="Takeuchi K."/>
            <person name="Arita M."/>
            <person name="Imose N."/>
            <person name="Musashino K."/>
            <person name="Yuuki H."/>
            <person name="Oshima A."/>
            <person name="Sasaki N."/>
            <person name="Aotsuka S."/>
            <person name="Yoshikawa Y."/>
            <person name="Matsunawa H."/>
            <person name="Ichihara T."/>
            <person name="Shiohata N."/>
            <person name="Sano S."/>
            <person name="Moriya S."/>
            <person name="Momiyama H."/>
            <person name="Satoh N."/>
            <person name="Takami S."/>
            <person name="Terashima Y."/>
            <person name="Suzuki O."/>
            <person name="Nakagawa S."/>
            <person name="Senoh A."/>
            <person name="Mizoguchi H."/>
            <person name="Goto Y."/>
            <person name="Shimizu F."/>
            <person name="Wakebe H."/>
            <person name="Hishigaki H."/>
            <person name="Watanabe T."/>
            <person name="Sugiyama A."/>
            <person name="Takemoto M."/>
            <person name="Kawakami B."/>
            <person name="Yamazaki M."/>
            <person name="Watanabe K."/>
            <person name="Kumagai A."/>
            <person name="Itakura S."/>
            <person name="Fukuzumi Y."/>
            <person name="Fujimori Y."/>
            <person name="Komiyama M."/>
            <person name="Tashiro H."/>
            <person name="Tanigami A."/>
            <person name="Fujiwara T."/>
            <person name="Ono T."/>
            <person name="Yamada K."/>
            <person name="Fujii Y."/>
            <person name="Ozaki K."/>
            <person name="Hirao M."/>
            <person name="Ohmori Y."/>
            <person name="Kawabata A."/>
            <person name="Hikiji T."/>
            <person name="Kobatake N."/>
            <person name="Inagaki H."/>
            <person name="Ikema Y."/>
            <person name="Okamoto S."/>
            <person name="Okitani R."/>
            <person name="Kawakami T."/>
            <person name="Noguchi S."/>
            <person name="Itoh T."/>
            <person name="Shigeta K."/>
            <person name="Senba T."/>
            <person name="Matsumura K."/>
            <person name="Nakajima Y."/>
            <person name="Mizuno T."/>
            <person name="Morinaga M."/>
            <person name="Sasaki M."/>
            <person name="Togashi T."/>
            <person name="Oyama M."/>
            <person name="Hata H."/>
            <person name="Watanabe M."/>
            <person name="Komatsu T."/>
            <person name="Mizushima-Sugano J."/>
            <person name="Satoh T."/>
            <person name="Shirai Y."/>
            <person name="Takahashi Y."/>
            <person name="Nakagawa K."/>
            <person name="Okumura K."/>
            <person name="Nagase T."/>
            <person name="Nomura N."/>
            <person name="Kikuchi H."/>
            <person name="Masuho Y."/>
            <person name="Yamashita R."/>
            <person name="Nakai K."/>
            <person name="Yada T."/>
            <person name="Nakamura Y."/>
            <person name="Ohara O."/>
            <person name="Isogai T."/>
            <person name="Sugano S."/>
        </authorList>
    </citation>
    <scope>NUCLEOTIDE SEQUENCE [LARGE SCALE MRNA] (ISOFORMS 1 AND 2)</scope>
    <source>
        <tissue>Lung</tissue>
        <tissue>Tongue</tissue>
    </source>
</reference>
<reference key="4">
    <citation type="journal article" date="2006" name="Nature">
        <title>DNA sequence and analysis of human chromosome 8.</title>
        <authorList>
            <person name="Nusbaum C."/>
            <person name="Mikkelsen T.S."/>
            <person name="Zody M.C."/>
            <person name="Asakawa S."/>
            <person name="Taudien S."/>
            <person name="Garber M."/>
            <person name="Kodira C.D."/>
            <person name="Schueler M.G."/>
            <person name="Shimizu A."/>
            <person name="Whittaker C.A."/>
            <person name="Chang J.L."/>
            <person name="Cuomo C.A."/>
            <person name="Dewar K."/>
            <person name="FitzGerald M.G."/>
            <person name="Yang X."/>
            <person name="Allen N.R."/>
            <person name="Anderson S."/>
            <person name="Asakawa T."/>
            <person name="Blechschmidt K."/>
            <person name="Bloom T."/>
            <person name="Borowsky M.L."/>
            <person name="Butler J."/>
            <person name="Cook A."/>
            <person name="Corum B."/>
            <person name="DeArellano K."/>
            <person name="DeCaprio D."/>
            <person name="Dooley K.T."/>
            <person name="Dorris L. III"/>
            <person name="Engels R."/>
            <person name="Gloeckner G."/>
            <person name="Hafez N."/>
            <person name="Hagopian D.S."/>
            <person name="Hall J.L."/>
            <person name="Ishikawa S.K."/>
            <person name="Jaffe D.B."/>
            <person name="Kamat A."/>
            <person name="Kudoh J."/>
            <person name="Lehmann R."/>
            <person name="Lokitsang T."/>
            <person name="Macdonald P."/>
            <person name="Major J.E."/>
            <person name="Matthews C.D."/>
            <person name="Mauceli E."/>
            <person name="Menzel U."/>
            <person name="Mihalev A.H."/>
            <person name="Minoshima S."/>
            <person name="Murayama Y."/>
            <person name="Naylor J.W."/>
            <person name="Nicol R."/>
            <person name="Nguyen C."/>
            <person name="O'Leary S.B."/>
            <person name="O'Neill K."/>
            <person name="Parker S.C.J."/>
            <person name="Polley A."/>
            <person name="Raymond C.K."/>
            <person name="Reichwald K."/>
            <person name="Rodriguez J."/>
            <person name="Sasaki T."/>
            <person name="Schilhabel M."/>
            <person name="Siddiqui R."/>
            <person name="Smith C.L."/>
            <person name="Sneddon T.P."/>
            <person name="Talamas J.A."/>
            <person name="Tenzin P."/>
            <person name="Topham K."/>
            <person name="Venkataraman V."/>
            <person name="Wen G."/>
            <person name="Yamazaki S."/>
            <person name="Young S.K."/>
            <person name="Zeng Q."/>
            <person name="Zimmer A.R."/>
            <person name="Rosenthal A."/>
            <person name="Birren B.W."/>
            <person name="Platzer M."/>
            <person name="Shimizu N."/>
            <person name="Lander E.S."/>
        </authorList>
    </citation>
    <scope>NUCLEOTIDE SEQUENCE [LARGE SCALE GENOMIC DNA]</scope>
</reference>
<reference key="5">
    <citation type="journal article" date="2004" name="Genome Res.">
        <title>The status, quality, and expansion of the NIH full-length cDNA project: the Mammalian Gene Collection (MGC).</title>
        <authorList>
            <consortium name="The MGC Project Team"/>
        </authorList>
    </citation>
    <scope>NUCLEOTIDE SEQUENCE [LARGE SCALE MRNA] (ISOFORM 1)</scope>
    <source>
        <tissue>Lung</tissue>
    </source>
</reference>
<reference key="6">
    <citation type="journal article" date="2008" name="Mol. Cancer Res.">
        <title>Sox7 Is an independent checkpoint for beta-catenin function in prostate and colon epithelial cells.</title>
        <authorList>
            <person name="Guo L."/>
            <person name="Zhong D."/>
            <person name="Lau S."/>
            <person name="Liu X."/>
            <person name="Dong X.Y."/>
            <person name="Sun X."/>
            <person name="Yang V.W."/>
            <person name="Vertino P.M."/>
            <person name="Moreno C.S."/>
            <person name="Varma V."/>
            <person name="Dong J.T."/>
            <person name="Zhou W."/>
        </authorList>
    </citation>
    <scope>FUNCTION</scope>
    <scope>INTERACTION WITH CTNNB1</scope>
    <scope>SUBCELLULAR LOCATION</scope>
    <scope>TISSUE SPECIFICITY</scope>
</reference>
<comment type="function">
    <text evidence="1 6">Binds to and activates the CDH5 promoter, hence plays a role in the transcriptional regulation of genes expressed in the hemogenic endothelium and blocks further differentiation into blood precursors (By similarity). May be required for the survival of both hematopoietic and endothelial precursors during specification (By similarity). Competes with GATA4 for binding and activation of the FGF3 promoter (By similarity). Represses Wnt/beta-catenin-stimulated transcription, probably by targeting CTNNB1 to proteasomal degradation. Binds the DNA sequence 5'-AACAAT-3'.</text>
</comment>
<comment type="subunit">
    <text evidence="6">Interacts with CTNNB1/beta-catenin; this interaction may lead to the proteasomal degradation of active CTNNB1 and thus inhibition of Wnt/beta-catenin-stimulated transcription.</text>
</comment>
<comment type="interaction">
    <interactant intactId="EBI-7239117">
        <id>Q9BT81</id>
    </interactant>
    <interactant intactId="EBI-21535880">
        <id>Q92870-2</id>
        <label>APBB2</label>
    </interactant>
    <organismsDiffer>false</organismsDiffer>
    <experiments>3</experiments>
</comment>
<comment type="interaction">
    <interactant intactId="EBI-7239117">
        <id>Q9BT81</id>
    </interactant>
    <interactant intactId="EBI-374781">
        <id>O76003</id>
        <label>GLRX3</label>
    </interactant>
    <organismsDiffer>false</organismsDiffer>
    <experiments>3</experiments>
</comment>
<comment type="interaction">
    <interactant intactId="EBI-7239117">
        <id>Q9BT81</id>
    </interactant>
    <interactant intactId="EBI-466029">
        <id>P42858</id>
        <label>HTT</label>
    </interactant>
    <organismsDiffer>false</organismsDiffer>
    <experiments>15</experiments>
</comment>
<comment type="interaction">
    <interactant intactId="EBI-7239117">
        <id>Q9BT81</id>
    </interactant>
    <interactant intactId="EBI-4395514">
        <id>Q8N9R8</id>
        <label>SCAI</label>
    </interactant>
    <organismsDiffer>false</organismsDiffer>
    <experiments>3</experiments>
</comment>
<comment type="subcellular location">
    <subcellularLocation>
        <location evidence="2">Nucleus</location>
    </subcellularLocation>
    <subcellularLocation>
        <location evidence="6">Cytoplasm</location>
    </subcellularLocation>
</comment>
<comment type="alternative products">
    <event type="alternative splicing"/>
    <isoform>
        <id>Q9BT81-1</id>
        <name>1</name>
        <sequence type="displayed"/>
    </isoform>
    <isoform>
        <id>Q9BT81-2</id>
        <name>2</name>
        <sequence type="described" ref="VSP_056667"/>
    </isoform>
</comment>
<comment type="tissue specificity">
    <text evidence="5 6">Widely expressed in adult and fetal tissues. Present both in mesenchymal and epithelial cells in some adult tissues, including colon. Tends to be down-regulated in prostate adenocarcinomas and colorectal tumors due to promoter hypermethylation.</text>
</comment>
<comment type="developmental stage">
    <text evidence="5">In 8 week-old embryo, expressed in brain, tongue, heart, liver, lung and vertebrae.</text>
</comment>
<proteinExistence type="evidence at protein level"/>
<feature type="chain" id="PRO_0000048731" description="Transcription factor SOX-7">
    <location>
        <begin position="1"/>
        <end position="388"/>
    </location>
</feature>
<feature type="domain" description="Sox C-terminal" evidence="3">
    <location>
        <begin position="268"/>
        <end position="388"/>
    </location>
</feature>
<feature type="DNA-binding region" description="HMG box" evidence="2">
    <location>
        <begin position="45"/>
        <end position="113"/>
    </location>
</feature>
<feature type="region of interest" description="Disordered" evidence="4">
    <location>
        <begin position="20"/>
        <end position="46"/>
    </location>
</feature>
<feature type="region of interest" description="Disordered" evidence="4">
    <location>
        <begin position="140"/>
        <end position="197"/>
    </location>
</feature>
<feature type="compositionally biased region" description="Basic and acidic residues" evidence="4">
    <location>
        <begin position="36"/>
        <end position="45"/>
    </location>
</feature>
<feature type="compositionally biased region" description="Basic and acidic residues" evidence="4">
    <location>
        <begin position="146"/>
        <end position="164"/>
    </location>
</feature>
<feature type="splice variant" id="VSP_056667" description="In isoform 2." evidence="7">
    <original>MASLLGAYPWPEGLECPALDAELSDGQSPPAVPRPPGDKGSESRIRRPMNAFMVWAKDERKRLAVQNPDLHNAELSKML</original>
    <variation>MSMLAERRRKQKWAVDPQNTAWSNDDSKFGQRMLEKMGWSKGKGLGAQEQGATDHIKVQVKNNHLGLGATINNEDNWIAHQDDFNQLLAELNTCHGQETTDSSDKKEKKSFSLEEKSKISKNRVHYMKFTK</variation>
    <location>
        <begin position="1"/>
        <end position="79"/>
    </location>
</feature>
<evidence type="ECO:0000250" key="1"/>
<evidence type="ECO:0000255" key="2">
    <source>
        <dbReference type="PROSITE-ProRule" id="PRU00267"/>
    </source>
</evidence>
<evidence type="ECO:0000255" key="3">
    <source>
        <dbReference type="PROSITE-ProRule" id="PRU00849"/>
    </source>
</evidence>
<evidence type="ECO:0000256" key="4">
    <source>
        <dbReference type="SAM" id="MobiDB-lite"/>
    </source>
</evidence>
<evidence type="ECO:0000269" key="5">
    <source>
    </source>
</evidence>
<evidence type="ECO:0000269" key="6">
    <source>
    </source>
</evidence>
<evidence type="ECO:0000303" key="7">
    <source>
    </source>
</evidence>